<gene>
    <name type="ordered locus">SaurJH9_1295</name>
</gene>
<sequence length="110" mass="13581">MGQNDLVKTLRMNYLFDFYQSLLTNKQRNYLELFYLEDYSLSEIADTFNVSRQAVYDNIRRTGDLVEDYEKKLELYQKFEQRREIYDEMKQHLSNPEQIQRYIQQLEDLE</sequence>
<comment type="function">
    <text evidence="1">Might take part in the signal recognition particle (SRP) pathway. This is inferred from the conservation of its genetic proximity to ftsY/ffh. May be a regulatory protein.</text>
</comment>
<comment type="similarity">
    <text evidence="1">Belongs to the UPF0122 family.</text>
</comment>
<protein>
    <recommendedName>
        <fullName evidence="1">UPF0122 protein SaurJH9_1295</fullName>
    </recommendedName>
</protein>
<accession>A5ISC1</accession>
<evidence type="ECO:0000255" key="1">
    <source>
        <dbReference type="HAMAP-Rule" id="MF_00245"/>
    </source>
</evidence>
<proteinExistence type="inferred from homology"/>
<feature type="chain" id="PRO_1000078403" description="UPF0122 protein SaurJH9_1295">
    <location>
        <begin position="1"/>
        <end position="110"/>
    </location>
</feature>
<reference key="1">
    <citation type="submission" date="2007-05" db="EMBL/GenBank/DDBJ databases">
        <title>Complete sequence of chromosome of Staphylococcus aureus subsp. aureus JH9.</title>
        <authorList>
            <consortium name="US DOE Joint Genome Institute"/>
            <person name="Copeland A."/>
            <person name="Lucas S."/>
            <person name="Lapidus A."/>
            <person name="Barry K."/>
            <person name="Detter J.C."/>
            <person name="Glavina del Rio T."/>
            <person name="Hammon N."/>
            <person name="Israni S."/>
            <person name="Pitluck S."/>
            <person name="Chain P."/>
            <person name="Malfatti S."/>
            <person name="Shin M."/>
            <person name="Vergez L."/>
            <person name="Schmutz J."/>
            <person name="Larimer F."/>
            <person name="Land M."/>
            <person name="Hauser L."/>
            <person name="Kyrpides N."/>
            <person name="Kim E."/>
            <person name="Tomasz A."/>
            <person name="Richardson P."/>
        </authorList>
    </citation>
    <scope>NUCLEOTIDE SEQUENCE [LARGE SCALE GENOMIC DNA]</scope>
    <source>
        <strain>JH9</strain>
    </source>
</reference>
<organism>
    <name type="scientific">Staphylococcus aureus (strain JH9)</name>
    <dbReference type="NCBI Taxonomy" id="359786"/>
    <lineage>
        <taxon>Bacteria</taxon>
        <taxon>Bacillati</taxon>
        <taxon>Bacillota</taxon>
        <taxon>Bacilli</taxon>
        <taxon>Bacillales</taxon>
        <taxon>Staphylococcaceae</taxon>
        <taxon>Staphylococcus</taxon>
    </lineage>
</organism>
<dbReference type="EMBL" id="CP000703">
    <property type="protein sequence ID" value="ABQ49094.1"/>
    <property type="molecule type" value="Genomic_DNA"/>
</dbReference>
<dbReference type="RefSeq" id="WP_000531320.1">
    <property type="nucleotide sequence ID" value="NC_009487.1"/>
</dbReference>
<dbReference type="SMR" id="A5ISC1"/>
<dbReference type="KEGG" id="saj:SaurJH9_1295"/>
<dbReference type="HOGENOM" id="CLU_129218_1_1_9"/>
<dbReference type="Gene3D" id="1.10.10.10">
    <property type="entry name" value="Winged helix-like DNA-binding domain superfamily/Winged helix DNA-binding domain"/>
    <property type="match status" value="1"/>
</dbReference>
<dbReference type="HAMAP" id="MF_00245">
    <property type="entry name" value="UPF0122"/>
    <property type="match status" value="1"/>
</dbReference>
<dbReference type="InterPro" id="IPR013324">
    <property type="entry name" value="RNA_pol_sigma_r3/r4-like"/>
</dbReference>
<dbReference type="InterPro" id="IPR007394">
    <property type="entry name" value="UPF0122"/>
</dbReference>
<dbReference type="InterPro" id="IPR054831">
    <property type="entry name" value="UPF0122_fam_protein"/>
</dbReference>
<dbReference type="InterPro" id="IPR036388">
    <property type="entry name" value="WH-like_DNA-bd_sf"/>
</dbReference>
<dbReference type="NCBIfam" id="NF001067">
    <property type="entry name" value="PRK00118.1-2"/>
    <property type="match status" value="1"/>
</dbReference>
<dbReference type="NCBIfam" id="NF001070">
    <property type="entry name" value="PRK00118.1-6"/>
    <property type="match status" value="1"/>
</dbReference>
<dbReference type="NCBIfam" id="NF045758">
    <property type="entry name" value="YlxM"/>
    <property type="match status" value="1"/>
</dbReference>
<dbReference type="PANTHER" id="PTHR40083">
    <property type="entry name" value="UPF0122 PROTEIN CBO2450/CLC_2298"/>
    <property type="match status" value="1"/>
</dbReference>
<dbReference type="PANTHER" id="PTHR40083:SF1">
    <property type="entry name" value="UPF0122 PROTEIN YLXM"/>
    <property type="match status" value="1"/>
</dbReference>
<dbReference type="Pfam" id="PF04297">
    <property type="entry name" value="UPF0122"/>
    <property type="match status" value="1"/>
</dbReference>
<dbReference type="SUPFAM" id="SSF88659">
    <property type="entry name" value="Sigma3 and sigma4 domains of RNA polymerase sigma factors"/>
    <property type="match status" value="1"/>
</dbReference>
<name>Y1295_STAA9</name>